<name>F16PA_METC4</name>
<sequence length="348" mass="37018">MTKPYGSSLDDHLDAEVAREPSLADTAATIRALAAAAIDVSETVGRGSLAGDLAAQGEHNSDGDVQKALDVIAHKRFMQALEEAPVAQVASEEAEDVVTLKAGAPLAVAIDPLDGSSNIGVGMVVGTIFGIRPVTPGEDPNASFLTPGTTQTAAGFVVYGPATTFVVTLGNGTRIFTLDRTDNVFRLTHDAMKIVPSASEYAINASNVRHWDGPVKSYIEDCLRGSEGPRDRDFNMRWTAALVADAQRVLIRGGVFLYPGDNRKGYAQGRLRLLYETAPIAFLIEQAGGGATDGQGRILERVATKIHERSPLVFGSTEEVECVAKYYDGRQPSAGRSPLFGQRGLMRS</sequence>
<keyword id="KW-0119">Carbohydrate metabolism</keyword>
<keyword id="KW-0963">Cytoplasm</keyword>
<keyword id="KW-0378">Hydrolase</keyword>
<keyword id="KW-0460">Magnesium</keyword>
<keyword id="KW-0479">Metal-binding</keyword>
<reference key="1">
    <citation type="submission" date="2008-12" db="EMBL/GenBank/DDBJ databases">
        <title>Complete sequence of chromosome of Methylobacterium chloromethanicum CM4.</title>
        <authorList>
            <consortium name="US DOE Joint Genome Institute"/>
            <person name="Lucas S."/>
            <person name="Copeland A."/>
            <person name="Lapidus A."/>
            <person name="Glavina del Rio T."/>
            <person name="Dalin E."/>
            <person name="Tice H."/>
            <person name="Bruce D."/>
            <person name="Goodwin L."/>
            <person name="Pitluck S."/>
            <person name="Chertkov O."/>
            <person name="Brettin T."/>
            <person name="Detter J.C."/>
            <person name="Han C."/>
            <person name="Larimer F."/>
            <person name="Land M."/>
            <person name="Hauser L."/>
            <person name="Kyrpides N."/>
            <person name="Mikhailova N."/>
            <person name="Marx C."/>
            <person name="Richardson P."/>
        </authorList>
    </citation>
    <scope>NUCLEOTIDE SEQUENCE [LARGE SCALE GENOMIC DNA]</scope>
    <source>
        <strain>CM4 / NCIMB 13688</strain>
    </source>
</reference>
<evidence type="ECO:0000255" key="1">
    <source>
        <dbReference type="HAMAP-Rule" id="MF_01855"/>
    </source>
</evidence>
<dbReference type="EC" id="3.1.3.11" evidence="1"/>
<dbReference type="EMBL" id="CP001298">
    <property type="protein sequence ID" value="ACK81860.1"/>
    <property type="molecule type" value="Genomic_DNA"/>
</dbReference>
<dbReference type="RefSeq" id="WP_012605927.1">
    <property type="nucleotide sequence ID" value="NC_011757.1"/>
</dbReference>
<dbReference type="SMR" id="B7L270"/>
<dbReference type="KEGG" id="mch:Mchl_0943"/>
<dbReference type="HOGENOM" id="CLU_039977_0_0_5"/>
<dbReference type="UniPathway" id="UPA00138"/>
<dbReference type="Proteomes" id="UP000002385">
    <property type="component" value="Chromosome"/>
</dbReference>
<dbReference type="GO" id="GO:0005829">
    <property type="term" value="C:cytosol"/>
    <property type="evidence" value="ECO:0007669"/>
    <property type="project" value="TreeGrafter"/>
</dbReference>
<dbReference type="GO" id="GO:0042132">
    <property type="term" value="F:fructose 1,6-bisphosphate 1-phosphatase activity"/>
    <property type="evidence" value="ECO:0007669"/>
    <property type="project" value="UniProtKB-UniRule"/>
</dbReference>
<dbReference type="GO" id="GO:0000287">
    <property type="term" value="F:magnesium ion binding"/>
    <property type="evidence" value="ECO:0007669"/>
    <property type="project" value="UniProtKB-UniRule"/>
</dbReference>
<dbReference type="GO" id="GO:0030388">
    <property type="term" value="P:fructose 1,6-bisphosphate metabolic process"/>
    <property type="evidence" value="ECO:0007669"/>
    <property type="project" value="TreeGrafter"/>
</dbReference>
<dbReference type="GO" id="GO:0006002">
    <property type="term" value="P:fructose 6-phosphate metabolic process"/>
    <property type="evidence" value="ECO:0007669"/>
    <property type="project" value="TreeGrafter"/>
</dbReference>
<dbReference type="GO" id="GO:0006000">
    <property type="term" value="P:fructose metabolic process"/>
    <property type="evidence" value="ECO:0007669"/>
    <property type="project" value="TreeGrafter"/>
</dbReference>
<dbReference type="GO" id="GO:0006094">
    <property type="term" value="P:gluconeogenesis"/>
    <property type="evidence" value="ECO:0007669"/>
    <property type="project" value="UniProtKB-UniRule"/>
</dbReference>
<dbReference type="GO" id="GO:0005986">
    <property type="term" value="P:sucrose biosynthetic process"/>
    <property type="evidence" value="ECO:0007669"/>
    <property type="project" value="TreeGrafter"/>
</dbReference>
<dbReference type="CDD" id="cd00354">
    <property type="entry name" value="FBPase"/>
    <property type="match status" value="1"/>
</dbReference>
<dbReference type="FunFam" id="3.40.190.80:FF:000011">
    <property type="entry name" value="Fructose-1,6-bisphosphatase class 1"/>
    <property type="match status" value="1"/>
</dbReference>
<dbReference type="Gene3D" id="3.40.190.80">
    <property type="match status" value="1"/>
</dbReference>
<dbReference type="Gene3D" id="3.30.540.10">
    <property type="entry name" value="Fructose-1,6-Bisphosphatase, subunit A, domain 1"/>
    <property type="match status" value="1"/>
</dbReference>
<dbReference type="HAMAP" id="MF_01855">
    <property type="entry name" value="FBPase_class1"/>
    <property type="match status" value="1"/>
</dbReference>
<dbReference type="InterPro" id="IPR044015">
    <property type="entry name" value="FBPase_C_dom"/>
</dbReference>
<dbReference type="InterPro" id="IPR000146">
    <property type="entry name" value="FBPase_class-1"/>
</dbReference>
<dbReference type="InterPro" id="IPR033391">
    <property type="entry name" value="FBPase_N"/>
</dbReference>
<dbReference type="InterPro" id="IPR028343">
    <property type="entry name" value="FBPtase"/>
</dbReference>
<dbReference type="InterPro" id="IPR020548">
    <property type="entry name" value="Fructose_bisphosphatase_AS"/>
</dbReference>
<dbReference type="NCBIfam" id="NF006779">
    <property type="entry name" value="PRK09293.1-3"/>
    <property type="match status" value="1"/>
</dbReference>
<dbReference type="NCBIfam" id="NF006780">
    <property type="entry name" value="PRK09293.1-4"/>
    <property type="match status" value="1"/>
</dbReference>
<dbReference type="PANTHER" id="PTHR11556">
    <property type="entry name" value="FRUCTOSE-1,6-BISPHOSPHATASE-RELATED"/>
    <property type="match status" value="1"/>
</dbReference>
<dbReference type="PANTHER" id="PTHR11556:SF35">
    <property type="entry name" value="SEDOHEPTULOSE-1,7-BISPHOSPHATASE, CHLOROPLASTIC"/>
    <property type="match status" value="1"/>
</dbReference>
<dbReference type="Pfam" id="PF00316">
    <property type="entry name" value="FBPase"/>
    <property type="match status" value="1"/>
</dbReference>
<dbReference type="Pfam" id="PF18913">
    <property type="entry name" value="FBPase_C"/>
    <property type="match status" value="1"/>
</dbReference>
<dbReference type="PIRSF" id="PIRSF500210">
    <property type="entry name" value="FBPtase"/>
    <property type="match status" value="1"/>
</dbReference>
<dbReference type="PIRSF" id="PIRSF000904">
    <property type="entry name" value="FBPtase_SBPase"/>
    <property type="match status" value="1"/>
</dbReference>
<dbReference type="PRINTS" id="PR00115">
    <property type="entry name" value="F16BPHPHTASE"/>
</dbReference>
<dbReference type="SUPFAM" id="SSF56655">
    <property type="entry name" value="Carbohydrate phosphatase"/>
    <property type="match status" value="1"/>
</dbReference>
<dbReference type="PROSITE" id="PS00124">
    <property type="entry name" value="FBPASE"/>
    <property type="match status" value="1"/>
</dbReference>
<organism>
    <name type="scientific">Methylorubrum extorquens (strain CM4 / NCIMB 13688)</name>
    <name type="common">Methylobacterium extorquens</name>
    <dbReference type="NCBI Taxonomy" id="440085"/>
    <lineage>
        <taxon>Bacteria</taxon>
        <taxon>Pseudomonadati</taxon>
        <taxon>Pseudomonadota</taxon>
        <taxon>Alphaproteobacteria</taxon>
        <taxon>Hyphomicrobiales</taxon>
        <taxon>Methylobacteriaceae</taxon>
        <taxon>Methylorubrum</taxon>
    </lineage>
</organism>
<accession>B7L270</accession>
<gene>
    <name evidence="1" type="primary">fbp</name>
    <name type="ordered locus">Mchl_0943</name>
</gene>
<proteinExistence type="inferred from homology"/>
<feature type="chain" id="PRO_1000188684" description="Fructose-1,6-bisphosphatase class 1">
    <location>
        <begin position="1"/>
        <end position="348"/>
    </location>
</feature>
<feature type="binding site" evidence="1">
    <location>
        <position position="92"/>
    </location>
    <ligand>
        <name>Mg(2+)</name>
        <dbReference type="ChEBI" id="CHEBI:18420"/>
        <label>1</label>
    </ligand>
</feature>
<feature type="binding site" evidence="1">
    <location>
        <position position="111"/>
    </location>
    <ligand>
        <name>Mg(2+)</name>
        <dbReference type="ChEBI" id="CHEBI:18420"/>
        <label>1</label>
    </ligand>
</feature>
<feature type="binding site" evidence="1">
    <location>
        <position position="111"/>
    </location>
    <ligand>
        <name>Mg(2+)</name>
        <dbReference type="ChEBI" id="CHEBI:18420"/>
        <label>2</label>
    </ligand>
</feature>
<feature type="binding site" evidence="1">
    <location>
        <position position="113"/>
    </location>
    <ligand>
        <name>Mg(2+)</name>
        <dbReference type="ChEBI" id="CHEBI:18420"/>
        <label>1</label>
    </ligand>
</feature>
<feature type="binding site" evidence="1">
    <location>
        <begin position="114"/>
        <end position="117"/>
    </location>
    <ligand>
        <name>substrate</name>
    </ligand>
</feature>
<feature type="binding site" evidence="1">
    <location>
        <position position="114"/>
    </location>
    <ligand>
        <name>Mg(2+)</name>
        <dbReference type="ChEBI" id="CHEBI:18420"/>
        <label>2</label>
    </ligand>
</feature>
<feature type="binding site" evidence="1">
    <location>
        <position position="204"/>
    </location>
    <ligand>
        <name>substrate</name>
    </ligand>
</feature>
<feature type="binding site" evidence="1">
    <location>
        <position position="276"/>
    </location>
    <ligand>
        <name>Mg(2+)</name>
        <dbReference type="ChEBI" id="CHEBI:18420"/>
        <label>2</label>
    </ligand>
</feature>
<comment type="catalytic activity">
    <reaction evidence="1">
        <text>beta-D-fructose 1,6-bisphosphate + H2O = beta-D-fructose 6-phosphate + phosphate</text>
        <dbReference type="Rhea" id="RHEA:11064"/>
        <dbReference type="ChEBI" id="CHEBI:15377"/>
        <dbReference type="ChEBI" id="CHEBI:32966"/>
        <dbReference type="ChEBI" id="CHEBI:43474"/>
        <dbReference type="ChEBI" id="CHEBI:57634"/>
        <dbReference type="EC" id="3.1.3.11"/>
    </reaction>
</comment>
<comment type="cofactor">
    <cofactor evidence="1">
        <name>Mg(2+)</name>
        <dbReference type="ChEBI" id="CHEBI:18420"/>
    </cofactor>
    <text evidence="1">Binds 2 magnesium ions per subunit.</text>
</comment>
<comment type="pathway">
    <text evidence="1">Carbohydrate biosynthesis; gluconeogenesis.</text>
</comment>
<comment type="subunit">
    <text evidence="1">Homotetramer.</text>
</comment>
<comment type="subcellular location">
    <subcellularLocation>
        <location evidence="1">Cytoplasm</location>
    </subcellularLocation>
</comment>
<comment type="similarity">
    <text evidence="1">Belongs to the FBPase class 1 family.</text>
</comment>
<protein>
    <recommendedName>
        <fullName evidence="1">Fructose-1,6-bisphosphatase class 1</fullName>
        <shortName evidence="1">FBPase class 1</shortName>
        <ecNumber evidence="1">3.1.3.11</ecNumber>
    </recommendedName>
    <alternativeName>
        <fullName evidence="1">D-fructose-1,6-bisphosphate 1-phosphohydrolase class 1</fullName>
    </alternativeName>
</protein>